<reference evidence="4" key="1">
    <citation type="journal article" date="2010" name="PLoS ONE">
        <title>The complete genome sequence of Haloferax volcanii DS2, a model archaeon.</title>
        <authorList>
            <person name="Hartman A.L."/>
            <person name="Norais C."/>
            <person name="Badger J.H."/>
            <person name="Delmas S."/>
            <person name="Haldenby S."/>
            <person name="Madupu R."/>
            <person name="Robinson J."/>
            <person name="Khouri H."/>
            <person name="Ren Q."/>
            <person name="Lowe T.M."/>
            <person name="Maupin-Furlow J."/>
            <person name="Pohlschroder M."/>
            <person name="Daniels C."/>
            <person name="Pfeiffer F."/>
            <person name="Allers T."/>
            <person name="Eisen J.A."/>
        </authorList>
    </citation>
    <scope>NUCLEOTIDE SEQUENCE [LARGE SCALE GENOMIC DNA]</scope>
    <source>
        <strain>ATCC 29605 / DSM 3757 / JCM 8879 / NBRC 14742 / NCIMB 2012 / VKM B-1768 / DS2</strain>
    </source>
</reference>
<reference evidence="5" key="2">
    <citation type="journal article" date="2014" name="PLoS Genet.">
        <title>Phylogenetically driven sequencing of extremely halophilic archaea reveals strategies for static and dynamic osmo-response.</title>
        <authorList>
            <person name="Becker E.A."/>
            <person name="Seitzer P.M."/>
            <person name="Tritt A."/>
            <person name="Larsen D."/>
            <person name="Krusor M."/>
            <person name="Yao A.I."/>
            <person name="Wu D."/>
            <person name="Madern D."/>
            <person name="Eisen J.A."/>
            <person name="Darling A.E."/>
            <person name="Facciotti M.T."/>
        </authorList>
    </citation>
    <scope>NUCLEOTIDE SEQUENCE [LARGE SCALE GENOMIC DNA]</scope>
    <source>
        <strain>ATCC 29605 / DSM 3757 / JCM 8879 / NBRC 14742 / NCIMB 2012 / VKM B-1768 / DS2</strain>
    </source>
</reference>
<reference key="3">
    <citation type="journal article" date="2024" name="Nat. Commun.">
        <title>Identification of structural and regulatory cell-shape determinants in Haloferax volcanii.</title>
        <authorList>
            <person name="Schiller H."/>
            <person name="Hong Y."/>
            <person name="Kouassi J."/>
            <person name="Rados T."/>
            <person name="Kwak J."/>
            <person name="DiLucido A."/>
            <person name="Safer D."/>
            <person name="Marchfelder A."/>
            <person name="Pfeiffer F."/>
            <person name="Bisson A."/>
            <person name="Schulze S."/>
            <person name="Pohlschroder M."/>
        </authorList>
    </citation>
    <scope>FUNCTION IN CELL-SHAPE DETERMINATION</scope>
    <scope>DISRUPTION PHENOTYPE</scope>
    <scope>DISCUSSION OF START SITE</scope>
    <source>
        <strain>H53</strain>
    </source>
</reference>
<comment type="function">
    <text evidence="1">Involved in cell-shape determination (PubMed:38360755). Required for the formation of disks (PubMed:38360755).</text>
</comment>
<comment type="disruption phenotype">
    <text evidence="1">The deletion mutant is hypermotile and forms only rods regardless of growth phase (PubMed:38360755). The mutant has a slight growth advantage in exponential phase (PubMed:38360755).</text>
</comment>
<comment type="caution">
    <text evidence="3">The N-terminus is shorter than in orthologs. The in vivo start codon of ddfA has yet to be identified.</text>
</comment>
<proteinExistence type="evidence at protein level"/>
<accession>A0A384L0Y7</accession>
<feature type="chain" id="PRO_0000462084" description="Disk-determining factor A">
    <location>
        <begin position="1"/>
        <end position="66"/>
    </location>
</feature>
<protein>
    <recommendedName>
        <fullName evidence="2">Disk-determining factor A</fullName>
    </recommendedName>
</protein>
<name>DDFA_HALVD</name>
<organism>
    <name type="scientific">Haloferax volcanii (strain ATCC 29605 / DSM 3757 / JCM 8879 / NBRC 14742 / NCIMB 2012 / VKM B-1768 / DS2)</name>
    <name type="common">Halobacterium volcanii</name>
    <dbReference type="NCBI Taxonomy" id="309800"/>
    <lineage>
        <taxon>Archaea</taxon>
        <taxon>Methanobacteriati</taxon>
        <taxon>Methanobacteriota</taxon>
        <taxon>Stenosarchaea group</taxon>
        <taxon>Halobacteria</taxon>
        <taxon>Halobacteriales</taxon>
        <taxon>Haloferacaceae</taxon>
        <taxon>Haloferax</taxon>
    </lineage>
</organism>
<dbReference type="EMBL" id="CP001956">
    <property type="status" value="NOT_ANNOTATED_CDS"/>
    <property type="molecule type" value="Genomic_DNA"/>
</dbReference>
<dbReference type="EMBL" id="AOHU01000041">
    <property type="protein sequence ID" value="ELY33405.1"/>
    <property type="molecule type" value="Genomic_DNA"/>
</dbReference>
<dbReference type="KEGG" id="hvo:HVO_2176"/>
<dbReference type="Proteomes" id="UP000008243">
    <property type="component" value="Chromosome"/>
</dbReference>
<dbReference type="Proteomes" id="UP000011532">
    <property type="component" value="Unassembled WGS sequence"/>
</dbReference>
<dbReference type="InterPro" id="IPR040624">
    <property type="entry name" value="HalOD1"/>
</dbReference>
<dbReference type="Pfam" id="PF18545">
    <property type="entry name" value="HalOD1"/>
    <property type="match status" value="1"/>
</dbReference>
<sequence length="66" mass="7115">MDKHARGDADLPPLTDHVDTDALDTLFGRDTPGAPRVSGASLEFDYADFVVTVESVGRIEVRDAGR</sequence>
<evidence type="ECO:0000269" key="1">
    <source>
    </source>
</evidence>
<evidence type="ECO:0000303" key="2">
    <source>
    </source>
</evidence>
<evidence type="ECO:0000305" key="3">
    <source>
    </source>
</evidence>
<evidence type="ECO:0000312" key="4">
    <source>
        <dbReference type="EMBL" id="CP001956"/>
    </source>
</evidence>
<evidence type="ECO:0000312" key="5">
    <source>
        <dbReference type="EMBL" id="ELY33405.1"/>
    </source>
</evidence>
<keyword id="KW-0133">Cell shape</keyword>
<keyword id="KW-1185">Reference proteome</keyword>
<gene>
    <name evidence="2" type="primary">ddfA</name>
    <name evidence="4" type="ordered locus">HVO_2176</name>
    <name evidence="5" type="ORF">C498_06173</name>
</gene>